<protein>
    <recommendedName>
        <fullName evidence="1 3">Triosephosphate isomerase</fullName>
        <shortName evidence="1 3">TIM</shortName>
        <shortName evidence="1">TPI</shortName>
        <ecNumber evidence="1">5.3.1.1</ecNumber>
    </recommendedName>
    <alternativeName>
        <fullName evidence="1">Triose-phosphate isomerase</fullName>
    </alternativeName>
</protein>
<evidence type="ECO:0000255" key="1">
    <source>
        <dbReference type="HAMAP-Rule" id="MF_00147"/>
    </source>
</evidence>
<evidence type="ECO:0000269" key="2">
    <source>
    </source>
</evidence>
<evidence type="ECO:0000303" key="3">
    <source>
    </source>
</evidence>
<feature type="chain" id="PRO_0000090333" description="Triosephosphate isomerase">
    <location>
        <begin position="1"/>
        <end position="226"/>
    </location>
</feature>
<feature type="active site" description="Electrophile" evidence="1">
    <location>
        <position position="97"/>
    </location>
</feature>
<feature type="active site" description="Proton acceptor" evidence="1">
    <location>
        <position position="145"/>
    </location>
</feature>
<feature type="binding site" evidence="1">
    <location>
        <begin position="13"/>
        <end position="15"/>
    </location>
    <ligand>
        <name>substrate</name>
    </ligand>
</feature>
<feature type="binding site" evidence="1">
    <location>
        <position position="150"/>
    </location>
    <ligand>
        <name>substrate</name>
    </ligand>
</feature>
<feature type="binding site" evidence="1">
    <location>
        <position position="185"/>
    </location>
    <ligand>
        <name>substrate</name>
    </ligand>
</feature>
<feature type="binding site" evidence="1">
    <location>
        <begin position="206"/>
        <end position="207"/>
    </location>
    <ligand>
        <name>substrate</name>
    </ligand>
</feature>
<dbReference type="EC" id="5.3.1.1" evidence="1"/>
<dbReference type="EMBL" id="Y11302">
    <property type="protein sequence ID" value="CAA72160.1"/>
    <property type="molecule type" value="Genomic_DNA"/>
</dbReference>
<dbReference type="SMR" id="O74025"/>
<dbReference type="BRENDA" id="5.3.1.1">
    <property type="organism ID" value="3251"/>
</dbReference>
<dbReference type="UniPathway" id="UPA00109">
    <property type="reaction ID" value="UER00189"/>
</dbReference>
<dbReference type="UniPathway" id="UPA00138"/>
<dbReference type="GO" id="GO:0005829">
    <property type="term" value="C:cytosol"/>
    <property type="evidence" value="ECO:0007669"/>
    <property type="project" value="TreeGrafter"/>
</dbReference>
<dbReference type="GO" id="GO:0004807">
    <property type="term" value="F:triose-phosphate isomerase activity"/>
    <property type="evidence" value="ECO:0007669"/>
    <property type="project" value="UniProtKB-UniRule"/>
</dbReference>
<dbReference type="GO" id="GO:0006094">
    <property type="term" value="P:gluconeogenesis"/>
    <property type="evidence" value="ECO:0007669"/>
    <property type="project" value="UniProtKB-UniRule"/>
</dbReference>
<dbReference type="GO" id="GO:0046166">
    <property type="term" value="P:glyceraldehyde-3-phosphate biosynthetic process"/>
    <property type="evidence" value="ECO:0007669"/>
    <property type="project" value="TreeGrafter"/>
</dbReference>
<dbReference type="GO" id="GO:0019563">
    <property type="term" value="P:glycerol catabolic process"/>
    <property type="evidence" value="ECO:0007669"/>
    <property type="project" value="TreeGrafter"/>
</dbReference>
<dbReference type="GO" id="GO:0006096">
    <property type="term" value="P:glycolytic process"/>
    <property type="evidence" value="ECO:0007669"/>
    <property type="project" value="UniProtKB-UniRule"/>
</dbReference>
<dbReference type="CDD" id="cd00311">
    <property type="entry name" value="TIM"/>
    <property type="match status" value="1"/>
</dbReference>
<dbReference type="FunFam" id="3.20.20.70:FF:000223">
    <property type="entry name" value="Triosephosphate isomerase"/>
    <property type="match status" value="1"/>
</dbReference>
<dbReference type="Gene3D" id="3.20.20.70">
    <property type="entry name" value="Aldolase class I"/>
    <property type="match status" value="1"/>
</dbReference>
<dbReference type="HAMAP" id="MF_00147_A">
    <property type="entry name" value="TIM_A"/>
    <property type="match status" value="1"/>
</dbReference>
<dbReference type="InterPro" id="IPR013785">
    <property type="entry name" value="Aldolase_TIM"/>
</dbReference>
<dbReference type="InterPro" id="IPR035990">
    <property type="entry name" value="TIM_sf"/>
</dbReference>
<dbReference type="InterPro" id="IPR000652">
    <property type="entry name" value="Triosephosphate_isomerase"/>
</dbReference>
<dbReference type="InterPro" id="IPR022891">
    <property type="entry name" value="Triosephosphate_isomerase_arc"/>
</dbReference>
<dbReference type="NCBIfam" id="NF003302">
    <property type="entry name" value="PRK04302.1"/>
    <property type="match status" value="1"/>
</dbReference>
<dbReference type="NCBIfam" id="TIGR00419">
    <property type="entry name" value="tim"/>
    <property type="match status" value="1"/>
</dbReference>
<dbReference type="PANTHER" id="PTHR21139">
    <property type="entry name" value="TRIOSEPHOSPHATE ISOMERASE"/>
    <property type="match status" value="1"/>
</dbReference>
<dbReference type="PANTHER" id="PTHR21139:SF42">
    <property type="entry name" value="TRIOSEPHOSPHATE ISOMERASE"/>
    <property type="match status" value="1"/>
</dbReference>
<dbReference type="Pfam" id="PF00121">
    <property type="entry name" value="TIM"/>
    <property type="match status" value="1"/>
</dbReference>
<dbReference type="SUPFAM" id="SSF51351">
    <property type="entry name" value="Triosephosphate isomerase (TIM)"/>
    <property type="match status" value="1"/>
</dbReference>
<dbReference type="PROSITE" id="PS51440">
    <property type="entry name" value="TIM_2"/>
    <property type="match status" value="1"/>
</dbReference>
<keyword id="KW-0963">Cytoplasm</keyword>
<keyword id="KW-0312">Gluconeogenesis</keyword>
<keyword id="KW-0324">Glycolysis</keyword>
<keyword id="KW-0413">Isomerase</keyword>
<organism>
    <name type="scientific">Methanobacterium bryantii</name>
    <dbReference type="NCBI Taxonomy" id="2161"/>
    <lineage>
        <taxon>Archaea</taxon>
        <taxon>Methanobacteriati</taxon>
        <taxon>Methanobacteriota</taxon>
        <taxon>Methanomada group</taxon>
        <taxon>Methanobacteria</taxon>
        <taxon>Methanobacteriales</taxon>
        <taxon>Methanobacteriaceae</taxon>
        <taxon>Methanobacterium</taxon>
    </lineage>
</organism>
<gene>
    <name evidence="1" type="primary">tpiA</name>
    <name type="synonym">tpi</name>
</gene>
<reference key="1">
    <citation type="submission" date="1997-02" db="EMBL/GenBank/DDBJ databases">
        <authorList>
            <person name="Schramm A."/>
        </authorList>
    </citation>
    <scope>NUCLEOTIDE SEQUENCE [GENOMIC DNA]</scope>
    <source>
        <strain>DSM 862</strain>
    </source>
</reference>
<reference key="2">
    <citation type="journal article" date="1996" name="FEBS Lett.">
        <title>Tetrameric triosephosphate isomerase from hyperthermophilic Archaea.</title>
        <authorList>
            <person name="Kohlhoff M."/>
            <person name="Dahm A."/>
            <person name="Hensel R."/>
        </authorList>
    </citation>
    <scope>SUBUNIT</scope>
</reference>
<accession>O74025</accession>
<sequence length="226" mass="23907">MNEIKETPIVILNFKTYLESTGENALKLAKGSEMVAEETGVNIMVHPQYADIYRIAHEVNIPVLAQHIDTIDAGGHTGSILPECVKEAGAVGTLINHSERRVELFEIDAAIKKADSLGLSTVVCTNNIETSSAAATLNPDFVAIEPPELIGSGIPVSKPEPEIVEKTVESIHNINPEVRVLCGAGISTGDDLKAAIDLGSEGVLLASGIILADDPKKALLDLVSKI</sequence>
<comment type="function">
    <text evidence="1">Involved in the gluconeogenesis. Catalyzes stereospecifically the conversion of dihydroxyacetone phosphate (DHAP) to D-glyceraldehyde-3-phosphate (G3P).</text>
</comment>
<comment type="catalytic activity">
    <reaction evidence="1">
        <text>D-glyceraldehyde 3-phosphate = dihydroxyacetone phosphate</text>
        <dbReference type="Rhea" id="RHEA:18585"/>
        <dbReference type="ChEBI" id="CHEBI:57642"/>
        <dbReference type="ChEBI" id="CHEBI:59776"/>
        <dbReference type="EC" id="5.3.1.1"/>
    </reaction>
</comment>
<comment type="pathway">
    <text evidence="1">Carbohydrate biosynthesis; gluconeogenesis.</text>
</comment>
<comment type="pathway">
    <text evidence="1">Carbohydrate degradation; glycolysis; D-glyceraldehyde 3-phosphate from glycerone phosphate: step 1/1.</text>
</comment>
<comment type="subunit">
    <text evidence="1 2">Homotetramer; dimer of dimers.</text>
</comment>
<comment type="subcellular location">
    <subcellularLocation>
        <location evidence="1">Cytoplasm</location>
    </subcellularLocation>
</comment>
<comment type="similarity">
    <text evidence="1">Belongs to the triosephosphate isomerase family.</text>
</comment>
<name>TPIS_METBR</name>
<proteinExistence type="evidence at protein level"/>